<proteinExistence type="inferred from homology"/>
<name>TRMB_HELHP</name>
<feature type="chain" id="PRO_0000171334" description="tRNA (guanine-N(7)-)-methyltransferase">
    <location>
        <begin position="1"/>
        <end position="396"/>
    </location>
</feature>
<feature type="binding site" evidence="1">
    <location>
        <position position="125"/>
    </location>
    <ligand>
        <name>S-adenosyl-L-methionine</name>
        <dbReference type="ChEBI" id="CHEBI:59789"/>
    </ligand>
</feature>
<feature type="binding site" evidence="1">
    <location>
        <position position="150"/>
    </location>
    <ligand>
        <name>S-adenosyl-L-methionine</name>
        <dbReference type="ChEBI" id="CHEBI:59789"/>
    </ligand>
</feature>
<feature type="binding site" evidence="1">
    <location>
        <position position="177"/>
    </location>
    <ligand>
        <name>S-adenosyl-L-methionine</name>
        <dbReference type="ChEBI" id="CHEBI:59789"/>
    </ligand>
</feature>
<feature type="binding site" evidence="1">
    <location>
        <position position="203"/>
    </location>
    <ligand>
        <name>substrate</name>
    </ligand>
</feature>
<feature type="binding site" evidence="1">
    <location>
        <position position="233"/>
    </location>
    <ligand>
        <name>substrate</name>
    </ligand>
</feature>
<gene>
    <name evidence="1" type="primary">trmB</name>
    <name type="ordered locus">HH_0785</name>
</gene>
<reference key="1">
    <citation type="journal article" date="2003" name="Proc. Natl. Acad. Sci. U.S.A.">
        <title>The complete genome sequence of the carcinogenic bacterium Helicobacter hepaticus.</title>
        <authorList>
            <person name="Suerbaum S."/>
            <person name="Josenhans C."/>
            <person name="Sterzenbach T."/>
            <person name="Drescher B."/>
            <person name="Brandt P."/>
            <person name="Bell M."/>
            <person name="Droege M."/>
            <person name="Fartmann B."/>
            <person name="Fischer H.-P."/>
            <person name="Ge Z."/>
            <person name="Hoerster A."/>
            <person name="Holland R."/>
            <person name="Klein K."/>
            <person name="Koenig J."/>
            <person name="Macko L."/>
            <person name="Mendz G.L."/>
            <person name="Nyakatura G."/>
            <person name="Schauer D.B."/>
            <person name="Shen Z."/>
            <person name="Weber J."/>
            <person name="Frosch M."/>
            <person name="Fox J.G."/>
        </authorList>
    </citation>
    <scope>NUCLEOTIDE SEQUENCE [LARGE SCALE GENOMIC DNA]</scope>
    <source>
        <strain>ATCC 51449 / 3B1</strain>
    </source>
</reference>
<protein>
    <recommendedName>
        <fullName evidence="1">tRNA (guanine-N(7)-)-methyltransferase</fullName>
        <ecNumber evidence="1">2.1.1.33</ecNumber>
    </recommendedName>
    <alternativeName>
        <fullName evidence="1">tRNA (guanine(46)-N(7))-methyltransferase</fullName>
    </alternativeName>
    <alternativeName>
        <fullName evidence="1">tRNA(m7G46)-methyltransferase</fullName>
    </alternativeName>
</protein>
<dbReference type="EC" id="2.1.1.33" evidence="1"/>
<dbReference type="EMBL" id="AE017125">
    <property type="protein sequence ID" value="AAP77382.1"/>
    <property type="molecule type" value="Genomic_DNA"/>
</dbReference>
<dbReference type="RefSeq" id="WP_011115627.1">
    <property type="nucleotide sequence ID" value="NC_004917.1"/>
</dbReference>
<dbReference type="SMR" id="Q7VI24"/>
<dbReference type="STRING" id="235279.HH_0785"/>
<dbReference type="KEGG" id="hhe:HH_0785"/>
<dbReference type="eggNOG" id="COG0220">
    <property type="taxonomic scope" value="Bacteria"/>
</dbReference>
<dbReference type="HOGENOM" id="CLU_041532_0_0_7"/>
<dbReference type="OrthoDB" id="9802090at2"/>
<dbReference type="UniPathway" id="UPA00989"/>
<dbReference type="Proteomes" id="UP000002495">
    <property type="component" value="Chromosome"/>
</dbReference>
<dbReference type="GO" id="GO:0043527">
    <property type="term" value="C:tRNA methyltransferase complex"/>
    <property type="evidence" value="ECO:0007669"/>
    <property type="project" value="TreeGrafter"/>
</dbReference>
<dbReference type="GO" id="GO:0008176">
    <property type="term" value="F:tRNA (guanine(46)-N7)-methyltransferase activity"/>
    <property type="evidence" value="ECO:0007669"/>
    <property type="project" value="UniProtKB-UniRule"/>
</dbReference>
<dbReference type="CDD" id="cd02440">
    <property type="entry name" value="AdoMet_MTases"/>
    <property type="match status" value="1"/>
</dbReference>
<dbReference type="Gene3D" id="3.40.50.150">
    <property type="entry name" value="Vaccinia Virus protein VP39"/>
    <property type="match status" value="1"/>
</dbReference>
<dbReference type="HAMAP" id="MF_01057">
    <property type="entry name" value="tRNA_methyltr_TrmB"/>
    <property type="match status" value="1"/>
</dbReference>
<dbReference type="InterPro" id="IPR029063">
    <property type="entry name" value="SAM-dependent_MTases_sf"/>
</dbReference>
<dbReference type="InterPro" id="IPR003358">
    <property type="entry name" value="tRNA_(Gua-N-7)_MeTrfase_Trmb"/>
</dbReference>
<dbReference type="InterPro" id="IPR055361">
    <property type="entry name" value="tRNA_methyltr_TrmB_bact"/>
</dbReference>
<dbReference type="NCBIfam" id="NF010719">
    <property type="entry name" value="PRK14121.1"/>
    <property type="match status" value="1"/>
</dbReference>
<dbReference type="NCBIfam" id="TIGR00091">
    <property type="entry name" value="tRNA (guanosine(46)-N7)-methyltransferase TrmB"/>
    <property type="match status" value="1"/>
</dbReference>
<dbReference type="PANTHER" id="PTHR23417">
    <property type="entry name" value="3-DEOXY-D-MANNO-OCTULOSONIC-ACID TRANSFERASE/TRNA GUANINE-N 7 - -METHYLTRANSFERASE"/>
    <property type="match status" value="1"/>
</dbReference>
<dbReference type="PANTHER" id="PTHR23417:SF14">
    <property type="entry name" value="PENTACOTRIPEPTIDE-REPEAT REGION OF PRORP DOMAIN-CONTAINING PROTEIN"/>
    <property type="match status" value="1"/>
</dbReference>
<dbReference type="Pfam" id="PF02390">
    <property type="entry name" value="Methyltransf_4"/>
    <property type="match status" value="1"/>
</dbReference>
<dbReference type="SUPFAM" id="SSF53335">
    <property type="entry name" value="S-adenosyl-L-methionine-dependent methyltransferases"/>
    <property type="match status" value="1"/>
</dbReference>
<dbReference type="PROSITE" id="PS51625">
    <property type="entry name" value="SAM_MT_TRMB"/>
    <property type="match status" value="1"/>
</dbReference>
<evidence type="ECO:0000255" key="1">
    <source>
        <dbReference type="HAMAP-Rule" id="MF_01057"/>
    </source>
</evidence>
<organism>
    <name type="scientific">Helicobacter hepaticus (strain ATCC 51449 / 3B1)</name>
    <dbReference type="NCBI Taxonomy" id="235279"/>
    <lineage>
        <taxon>Bacteria</taxon>
        <taxon>Pseudomonadati</taxon>
        <taxon>Campylobacterota</taxon>
        <taxon>Epsilonproteobacteria</taxon>
        <taxon>Campylobacterales</taxon>
        <taxon>Helicobacteraceae</taxon>
        <taxon>Helicobacter</taxon>
    </lineage>
</organism>
<accession>Q7VI24</accession>
<keyword id="KW-0489">Methyltransferase</keyword>
<keyword id="KW-1185">Reference proteome</keyword>
<keyword id="KW-0949">S-adenosyl-L-methionine</keyword>
<keyword id="KW-0808">Transferase</keyword>
<keyword id="KW-0819">tRNA processing</keyword>
<comment type="function">
    <text evidence="1">Catalyzes the formation of N(7)-methylguanine at position 46 (m7G46) in tRNA.</text>
</comment>
<comment type="catalytic activity">
    <reaction evidence="1">
        <text>guanosine(46) in tRNA + S-adenosyl-L-methionine = N(7)-methylguanosine(46) in tRNA + S-adenosyl-L-homocysteine</text>
        <dbReference type="Rhea" id="RHEA:42708"/>
        <dbReference type="Rhea" id="RHEA-COMP:10188"/>
        <dbReference type="Rhea" id="RHEA-COMP:10189"/>
        <dbReference type="ChEBI" id="CHEBI:57856"/>
        <dbReference type="ChEBI" id="CHEBI:59789"/>
        <dbReference type="ChEBI" id="CHEBI:74269"/>
        <dbReference type="ChEBI" id="CHEBI:74480"/>
        <dbReference type="EC" id="2.1.1.33"/>
    </reaction>
</comment>
<comment type="pathway">
    <text evidence="1">tRNA modification; N(7)-methylguanine-tRNA biosynthesis.</text>
</comment>
<comment type="similarity">
    <text evidence="1">Belongs to the class I-like SAM-binding methyltransferase superfamily. TrmB family.</text>
</comment>
<sequence length="396" mass="46253">MPHFLASHITLPPMPFTQEGYTFVYEAKQCNDSSQSLILVRYEDNEFFLRKAWRGNKNNAILKCEKSTKTQPTGIIKNALKILCAYQKNVISHNLNKNTPRQNLQSPYFQSMDFFLDFAKPCLIEIGFGSGRHLLHLAQSNPHFMCIGIEIHTPSIEQILRQVQLLGLENLYIINGDARILLEILSSHIAQGIYVHFPVPWNKKHHRRIFSPKFFQESLRVLDNNGVLHLRSDDEIYFQDALSLALQQESISLEIHKNQQEVITSKYEARWKKQQKNIYDLKIFHTYKNTNNEKNVKNTQKNFYFDKILRKNLDNYKNFPHKKIANDWFLHIDNLYCAGDIYVLALCFGDFNQPQSKFLQIEFCNNVSARYIGSNPIPTQAAIKAHKYLIQILTQE</sequence>